<dbReference type="EC" id="2.7.7.6"/>
<dbReference type="EMBL" id="M13209">
    <property type="protein sequence ID" value="AAB59833.1"/>
    <property type="molecule type" value="Genomic_DNA"/>
</dbReference>
<dbReference type="EMBL" id="X01978">
    <property type="protein sequence ID" value="CAA26018.1"/>
    <property type="molecule type" value="Genomic_DNA"/>
</dbReference>
<dbReference type="EMBL" id="AY243312">
    <property type="protein sequence ID" value="AAO89375.1"/>
    <property type="molecule type" value="Genomic_DNA"/>
</dbReference>
<dbReference type="PIR" id="A25734">
    <property type="entry name" value="RNVZ22"/>
</dbReference>
<dbReference type="RefSeq" id="YP_232978.1">
    <property type="nucleotide sequence ID" value="NC_006998.1"/>
</dbReference>
<dbReference type="PDB" id="6RIE">
    <property type="method" value="EM"/>
    <property type="resolution" value="3.10 A"/>
    <property type="chains" value="E=1-185"/>
</dbReference>
<dbReference type="PDB" id="8C8H">
    <property type="method" value="EM"/>
    <property type="resolution" value="3.84 A"/>
    <property type="chains" value="E=1-185"/>
</dbReference>
<dbReference type="PDBsum" id="6RIE"/>
<dbReference type="PDBsum" id="8C8H"/>
<dbReference type="EMDB" id="EMD-16476"/>
<dbReference type="SMR" id="P68609"/>
<dbReference type="DNASU" id="3707552"/>
<dbReference type="GeneID" id="3707552"/>
<dbReference type="KEGG" id="vg:3707552"/>
<dbReference type="Proteomes" id="UP000000344">
    <property type="component" value="Genome"/>
</dbReference>
<dbReference type="GO" id="GO:0000428">
    <property type="term" value="C:DNA-directed RNA polymerase complex"/>
    <property type="evidence" value="ECO:0007669"/>
    <property type="project" value="UniProtKB-KW"/>
</dbReference>
<dbReference type="GO" id="GO:0044423">
    <property type="term" value="C:virion component"/>
    <property type="evidence" value="ECO:0007669"/>
    <property type="project" value="UniProtKB-KW"/>
</dbReference>
<dbReference type="GO" id="GO:0003677">
    <property type="term" value="F:DNA binding"/>
    <property type="evidence" value="ECO:0007669"/>
    <property type="project" value="InterPro"/>
</dbReference>
<dbReference type="GO" id="GO:0003899">
    <property type="term" value="F:DNA-directed RNA polymerase activity"/>
    <property type="evidence" value="ECO:0007669"/>
    <property type="project" value="UniProtKB-EC"/>
</dbReference>
<dbReference type="GO" id="GO:0039695">
    <property type="term" value="P:DNA-templated viral transcription"/>
    <property type="evidence" value="ECO:0000303"/>
    <property type="project" value="UniProtKB"/>
</dbReference>
<dbReference type="InterPro" id="IPR007937">
    <property type="entry name" value="RNA_Pol_22kDa_poxvir"/>
</dbReference>
<dbReference type="Pfam" id="PF05273">
    <property type="entry name" value="Pox_RNA_Pol_22"/>
    <property type="match status" value="1"/>
</dbReference>
<dbReference type="PIRSF" id="PIRSF000744">
    <property type="entry name" value="RPO22"/>
    <property type="match status" value="1"/>
</dbReference>
<name>RP22_VACCW</name>
<evidence type="ECO:0000269" key="1">
    <source>
    </source>
</evidence>
<evidence type="ECO:0000269" key="2">
    <source>
    </source>
</evidence>
<evidence type="ECO:0000305" key="3"/>
<evidence type="ECO:0007744" key="4">
    <source>
        <dbReference type="PDB" id="6RIE"/>
    </source>
</evidence>
<evidence type="ECO:0007829" key="5">
    <source>
        <dbReference type="PDB" id="6RIE"/>
    </source>
</evidence>
<protein>
    <recommendedName>
        <fullName>DNA-directed RNA polymerase 22 kDa subunit</fullName>
        <ecNumber>2.7.7.6</ecNumber>
    </recommendedName>
</protein>
<accession>P68609</accession>
<accession>P07391</accession>
<accession>Q76ZT0</accession>
<reference key="1">
    <citation type="journal article" date="1986" name="Proc. Natl. Acad. Sci. U.S.A.">
        <title>Homology between RNA polymerases of poxviruses, prokaryotes, and eukaryotes: nucleotide sequence and transcriptional analysis of vaccinia virus genes encoding 147-kDa and 22-kDa subunits.</title>
        <authorList>
            <person name="Broyles S.S."/>
            <person name="Moss B."/>
        </authorList>
    </citation>
    <scope>NUCLEOTIDE SEQUENCE [GENOMIC DNA]</scope>
</reference>
<reference key="2">
    <citation type="journal article" date="1985" name="Nucleic Acids Res.">
        <title>Nucleotide sequence of a cluster of early and late genes in a conserved segment of the vaccinia virus genome.</title>
        <authorList>
            <person name="Plucienniczak A."/>
            <person name="Schroeder E."/>
            <person name="Zettlmeissl G."/>
            <person name="Streeck R.E."/>
        </authorList>
    </citation>
    <scope>NUCLEOTIDE SEQUENCE [GENOMIC DNA]</scope>
</reference>
<reference key="3">
    <citation type="submission" date="2003-02" db="EMBL/GenBank/DDBJ databases">
        <title>Sequencing of the coding region of Vaccinia-WR to an average 9-fold redundancy and an error rate of 0.16/10kb.</title>
        <authorList>
            <person name="Esposito J.J."/>
            <person name="Frace A.M."/>
            <person name="Sammons S.A."/>
            <person name="Olsen-Rasmussen M."/>
            <person name="Osborne J."/>
            <person name="Wohlhueter R."/>
        </authorList>
    </citation>
    <scope>NUCLEOTIDE SEQUENCE [LARGE SCALE GENOMIC DNA]</scope>
</reference>
<reference key="4">
    <citation type="journal article" date="2003" name="J. Gen. Virol.">
        <title>Vaccinia virus transcription.</title>
        <authorList>
            <person name="Broyles S.S."/>
        </authorList>
    </citation>
    <scope>REVIEW</scope>
</reference>
<reference key="5">
    <citation type="journal article" date="2009" name="J. Virol.">
        <title>Interaction of the vaccinia virus RNA polymerase-associated 94-kilodalton protein with the early transcription factor.</title>
        <authorList>
            <person name="Yang Z."/>
            <person name="Moss B."/>
        </authorList>
    </citation>
    <scope>FUNCTION</scope>
</reference>
<reference evidence="4" key="6">
    <citation type="journal article" date="2019" name="Cell">
        <title>Structural Basis of Poxvirus Transcription: Transcribing and Capping Vaccinia Complexes.</title>
        <authorList>
            <person name="Hillen H.S."/>
            <person name="Bartuli J."/>
            <person name="Grimm C."/>
            <person name="Dienemann C."/>
            <person name="Bedenk K."/>
            <person name="Szalay A.A."/>
            <person name="Fischer U."/>
            <person name="Cramer P."/>
        </authorList>
    </citation>
    <scope>STRUCTURE BY ELECTRON MICROSCOPY (3.10 ANGSTROMS) IN COMPLEX WITH OPG66; OPG90; OPG105; OPG119; OPG131; OPG151 AND OPG156</scope>
    <scope>FUNCTION</scope>
</reference>
<comment type="function">
    <text evidence="1 2">Part of the DNA-dependent RNA polymerase which catalyzes the transcription of viral DNA into RNA using the four ribonucleoside triphosphates as substrates (PubMed:31835031). Responsible for the transcription of early, intermediate and late genes. DNA-dependent RNA polymerase associates with the early transcription factor (ETF), itself composed of OPG118 and OPG133, thereby allowing the early genes transcription. Late transcription, and probably also intermediate transcription, require newly synthesized RNA polymerase.</text>
</comment>
<comment type="catalytic activity">
    <reaction>
        <text>RNA(n) + a ribonucleoside 5'-triphosphate = RNA(n+1) + diphosphate</text>
        <dbReference type="Rhea" id="RHEA:21248"/>
        <dbReference type="Rhea" id="RHEA-COMP:14527"/>
        <dbReference type="Rhea" id="RHEA-COMP:17342"/>
        <dbReference type="ChEBI" id="CHEBI:33019"/>
        <dbReference type="ChEBI" id="CHEBI:61557"/>
        <dbReference type="ChEBI" id="CHEBI:140395"/>
        <dbReference type="EC" id="2.7.7.6"/>
    </reaction>
</comment>
<comment type="subunit">
    <text evidence="2">The DNA-dependent RNA polymerase used for intermediate and late genes expression consists of eight subunits Rpo30/OPG66, Rpo7/OPG90, Rpo22/OPG103, Rpo147/OPG105, Rpo18/OPG119, Rpo19/OPG131, Rpo132/OPG151 and Rpo35/OPG156 (PubMed:31835031). The same holoenzyme, with the addition of the transcription-specificity factor OPG109, is used for early gene expression.</text>
</comment>
<comment type="subcellular location">
    <subcellularLocation>
        <location evidence="3">Virion</location>
    </subcellularLocation>
    <text>All the enzymes and other proteins required to synthesize early mRNAs are packaged within the virion core along with the DNA genome. This is necessary because viral early mRNAs are synthesized within minutes after virus entry into the cell and are extruded through pores in the core particle.</text>
</comment>
<comment type="similarity">
    <text evidence="3">Belongs to the poxviridae DNA-directed RNA polymerase 22 kDa subunit family.</text>
</comment>
<gene>
    <name type="primary">OPG103</name>
    <name type="synonym">RPO22</name>
    <name type="ordered locus">VACWR096</name>
    <name type="ORF">J4R</name>
</gene>
<feature type="chain" id="PRO_0000099140" description="DNA-directed RNA polymerase 22 kDa subunit">
    <location>
        <begin position="1"/>
        <end position="185"/>
    </location>
</feature>
<feature type="helix" evidence="5">
    <location>
        <begin position="5"/>
        <end position="21"/>
    </location>
</feature>
<feature type="helix" evidence="5">
    <location>
        <begin position="32"/>
        <end position="34"/>
    </location>
</feature>
<feature type="strand" evidence="5">
    <location>
        <begin position="35"/>
        <end position="40"/>
    </location>
</feature>
<feature type="strand" evidence="5">
    <location>
        <begin position="46"/>
        <end position="52"/>
    </location>
</feature>
<feature type="turn" evidence="5">
    <location>
        <begin position="53"/>
        <end position="55"/>
    </location>
</feature>
<feature type="strand" evidence="5">
    <location>
        <begin position="59"/>
        <end position="67"/>
    </location>
</feature>
<feature type="strand" evidence="5">
    <location>
        <begin position="75"/>
        <end position="84"/>
    </location>
</feature>
<feature type="strand" evidence="5">
    <location>
        <begin position="92"/>
        <end position="95"/>
    </location>
</feature>
<feature type="strand" evidence="5">
    <location>
        <begin position="113"/>
        <end position="115"/>
    </location>
</feature>
<feature type="helix" evidence="5">
    <location>
        <begin position="118"/>
        <end position="127"/>
    </location>
</feature>
<feature type="strand" evidence="5">
    <location>
        <begin position="141"/>
        <end position="146"/>
    </location>
</feature>
<feature type="helix" evidence="5">
    <location>
        <begin position="147"/>
        <end position="151"/>
    </location>
</feature>
<feature type="strand" evidence="5">
    <location>
        <begin position="155"/>
        <end position="157"/>
    </location>
</feature>
<feature type="strand" evidence="5">
    <location>
        <begin position="161"/>
        <end position="168"/>
    </location>
</feature>
<feature type="turn" evidence="5">
    <location>
        <begin position="169"/>
        <end position="171"/>
    </location>
</feature>
<feature type="strand" evidence="5">
    <location>
        <begin position="172"/>
        <end position="181"/>
    </location>
</feature>
<sequence>MNQYNVKYLAKILCLKTEIARDPYAVINRNVLLRYTTDIEYNDLVTLITVRHKIDSMKTVFQVFNESSINYTPVDDDYGEPIIITSYLQKGHNKFPVNFLYIDVVISDLFPSFVRLDTTETNIVNSVLQTGDGKKTLRLPKMLETEIVVKILYRPNIPLKIVRFFRNNMVTGVEIADRSVISVAD</sequence>
<organism>
    <name type="scientific">Vaccinia virus (strain Western Reserve)</name>
    <name type="common">VACV</name>
    <name type="synonym">Vaccinia virus (strain WR)</name>
    <dbReference type="NCBI Taxonomy" id="10254"/>
    <lineage>
        <taxon>Viruses</taxon>
        <taxon>Varidnaviria</taxon>
        <taxon>Bamfordvirae</taxon>
        <taxon>Nucleocytoviricota</taxon>
        <taxon>Pokkesviricetes</taxon>
        <taxon>Chitovirales</taxon>
        <taxon>Poxviridae</taxon>
        <taxon>Chordopoxvirinae</taxon>
        <taxon>Orthopoxvirus</taxon>
        <taxon>Vaccinia virus</taxon>
    </lineage>
</organism>
<keyword id="KW-0002">3D-structure</keyword>
<keyword id="KW-0240">DNA-directed RNA polymerase</keyword>
<keyword id="KW-0548">Nucleotidyltransferase</keyword>
<keyword id="KW-1185">Reference proteome</keyword>
<keyword id="KW-0804">Transcription</keyword>
<keyword id="KW-0808">Transferase</keyword>
<keyword id="KW-0946">Virion</keyword>
<organismHost>
    <name type="scientific">Bos taurus</name>
    <name type="common">Bovine</name>
    <dbReference type="NCBI Taxonomy" id="9913"/>
</organismHost>
<proteinExistence type="evidence at protein level"/>